<evidence type="ECO:0000255" key="1">
    <source>
        <dbReference type="HAMAP-Rule" id="MF_00003"/>
    </source>
</evidence>
<evidence type="ECO:0000256" key="2">
    <source>
        <dbReference type="SAM" id="MobiDB-lite"/>
    </source>
</evidence>
<sequence length="142" mass="16233">MAKEFSRTRRIAQQLQQELAVILQRDMKDPRIGFVTVNDVDVSRDLSYAKVFVTFYEEDLTLVEQKIAALTAAAPYVRTLVAGRMKLRVMPELRFIYDSSLVEGMRMSNLVSQVITNDKAKQKQAGREDDTPSVDEQEKDTD</sequence>
<dbReference type="EMBL" id="CP000302">
    <property type="protein sequence ID" value="ABE54296.1"/>
    <property type="molecule type" value="Genomic_DNA"/>
</dbReference>
<dbReference type="RefSeq" id="WP_011495460.1">
    <property type="nucleotide sequence ID" value="NC_007954.1"/>
</dbReference>
<dbReference type="SMR" id="Q12QI0"/>
<dbReference type="STRING" id="318161.Sden_1008"/>
<dbReference type="KEGG" id="sdn:Sden_1008"/>
<dbReference type="eggNOG" id="COG0858">
    <property type="taxonomic scope" value="Bacteria"/>
</dbReference>
<dbReference type="HOGENOM" id="CLU_089475_5_0_6"/>
<dbReference type="OrthoDB" id="307788at2"/>
<dbReference type="Proteomes" id="UP000001982">
    <property type="component" value="Chromosome"/>
</dbReference>
<dbReference type="GO" id="GO:0005829">
    <property type="term" value="C:cytosol"/>
    <property type="evidence" value="ECO:0007669"/>
    <property type="project" value="TreeGrafter"/>
</dbReference>
<dbReference type="GO" id="GO:0043024">
    <property type="term" value="F:ribosomal small subunit binding"/>
    <property type="evidence" value="ECO:0007669"/>
    <property type="project" value="TreeGrafter"/>
</dbReference>
<dbReference type="GO" id="GO:0030490">
    <property type="term" value="P:maturation of SSU-rRNA"/>
    <property type="evidence" value="ECO:0007669"/>
    <property type="project" value="UniProtKB-UniRule"/>
</dbReference>
<dbReference type="FunFam" id="3.30.300.20:FF:000007">
    <property type="entry name" value="Ribosome-binding factor A"/>
    <property type="match status" value="1"/>
</dbReference>
<dbReference type="Gene3D" id="3.30.300.20">
    <property type="match status" value="1"/>
</dbReference>
<dbReference type="HAMAP" id="MF_00003">
    <property type="entry name" value="RbfA"/>
    <property type="match status" value="1"/>
</dbReference>
<dbReference type="InterPro" id="IPR015946">
    <property type="entry name" value="KH_dom-like_a/b"/>
</dbReference>
<dbReference type="InterPro" id="IPR000238">
    <property type="entry name" value="RbfA"/>
</dbReference>
<dbReference type="InterPro" id="IPR023799">
    <property type="entry name" value="RbfA_dom_sf"/>
</dbReference>
<dbReference type="InterPro" id="IPR020053">
    <property type="entry name" value="Ribosome-bd_factorA_CS"/>
</dbReference>
<dbReference type="NCBIfam" id="TIGR00082">
    <property type="entry name" value="rbfA"/>
    <property type="match status" value="1"/>
</dbReference>
<dbReference type="PANTHER" id="PTHR33515">
    <property type="entry name" value="RIBOSOME-BINDING FACTOR A, CHLOROPLASTIC-RELATED"/>
    <property type="match status" value="1"/>
</dbReference>
<dbReference type="PANTHER" id="PTHR33515:SF1">
    <property type="entry name" value="RIBOSOME-BINDING FACTOR A, CHLOROPLASTIC-RELATED"/>
    <property type="match status" value="1"/>
</dbReference>
<dbReference type="Pfam" id="PF02033">
    <property type="entry name" value="RBFA"/>
    <property type="match status" value="1"/>
</dbReference>
<dbReference type="SUPFAM" id="SSF89919">
    <property type="entry name" value="Ribosome-binding factor A, RbfA"/>
    <property type="match status" value="1"/>
</dbReference>
<dbReference type="PROSITE" id="PS01319">
    <property type="entry name" value="RBFA"/>
    <property type="match status" value="1"/>
</dbReference>
<accession>Q12QI0</accession>
<comment type="function">
    <text evidence="1">One of several proteins that assist in the late maturation steps of the functional core of the 30S ribosomal subunit. Associates with free 30S ribosomal subunits (but not with 30S subunits that are part of 70S ribosomes or polysomes). Required for efficient processing of 16S rRNA. May interact with the 5'-terminal helix region of 16S rRNA.</text>
</comment>
<comment type="subunit">
    <text evidence="1">Monomer. Binds 30S ribosomal subunits, but not 50S ribosomal subunits or 70S ribosomes.</text>
</comment>
<comment type="subcellular location">
    <subcellularLocation>
        <location evidence="1">Cytoplasm</location>
    </subcellularLocation>
</comment>
<comment type="similarity">
    <text evidence="1">Belongs to the RbfA family.</text>
</comment>
<organism>
    <name type="scientific">Shewanella denitrificans (strain OS217 / ATCC BAA-1090 / DSM 15013)</name>
    <dbReference type="NCBI Taxonomy" id="318161"/>
    <lineage>
        <taxon>Bacteria</taxon>
        <taxon>Pseudomonadati</taxon>
        <taxon>Pseudomonadota</taxon>
        <taxon>Gammaproteobacteria</taxon>
        <taxon>Alteromonadales</taxon>
        <taxon>Shewanellaceae</taxon>
        <taxon>Shewanella</taxon>
    </lineage>
</organism>
<name>RBFA_SHEDO</name>
<reference key="1">
    <citation type="submission" date="2006-03" db="EMBL/GenBank/DDBJ databases">
        <title>Complete sequence of Shewanella denitrificans OS217.</title>
        <authorList>
            <consortium name="US DOE Joint Genome Institute"/>
            <person name="Copeland A."/>
            <person name="Lucas S."/>
            <person name="Lapidus A."/>
            <person name="Barry K."/>
            <person name="Detter J.C."/>
            <person name="Glavina del Rio T."/>
            <person name="Hammon N."/>
            <person name="Israni S."/>
            <person name="Dalin E."/>
            <person name="Tice H."/>
            <person name="Pitluck S."/>
            <person name="Brettin T."/>
            <person name="Bruce D."/>
            <person name="Han C."/>
            <person name="Tapia R."/>
            <person name="Gilna P."/>
            <person name="Kiss H."/>
            <person name="Schmutz J."/>
            <person name="Larimer F."/>
            <person name="Land M."/>
            <person name="Hauser L."/>
            <person name="Kyrpides N."/>
            <person name="Lykidis A."/>
            <person name="Richardson P."/>
        </authorList>
    </citation>
    <scope>NUCLEOTIDE SEQUENCE [LARGE SCALE GENOMIC DNA]</scope>
    <source>
        <strain>OS217 / ATCC BAA-1090 / DSM 15013</strain>
    </source>
</reference>
<protein>
    <recommendedName>
        <fullName evidence="1">Ribosome-binding factor A</fullName>
    </recommendedName>
</protein>
<keyword id="KW-0963">Cytoplasm</keyword>
<keyword id="KW-1185">Reference proteome</keyword>
<keyword id="KW-0690">Ribosome biogenesis</keyword>
<gene>
    <name evidence="1" type="primary">rbfA</name>
    <name type="ordered locus">Sden_1008</name>
</gene>
<proteinExistence type="inferred from homology"/>
<feature type="chain" id="PRO_1000000201" description="Ribosome-binding factor A">
    <location>
        <begin position="1"/>
        <end position="142"/>
    </location>
</feature>
<feature type="region of interest" description="Disordered" evidence="2">
    <location>
        <begin position="118"/>
        <end position="142"/>
    </location>
</feature>
<feature type="compositionally biased region" description="Basic and acidic residues" evidence="2">
    <location>
        <begin position="118"/>
        <end position="130"/>
    </location>
</feature>
<feature type="compositionally biased region" description="Acidic residues" evidence="2">
    <location>
        <begin position="131"/>
        <end position="142"/>
    </location>
</feature>